<evidence type="ECO:0000255" key="1"/>
<evidence type="ECO:0000269" key="2">
    <source>
    </source>
</evidence>
<evidence type="ECO:0000269" key="3">
    <source>
    </source>
</evidence>
<evidence type="ECO:0000269" key="4">
    <source>
    </source>
</evidence>
<evidence type="ECO:0000303" key="5">
    <source>
    </source>
</evidence>
<evidence type="ECO:0000305" key="6">
    <source>
    </source>
</evidence>
<evidence type="ECO:0000312" key="7">
    <source>
        <dbReference type="SGD" id="S000003683"/>
    </source>
</evidence>
<proteinExistence type="evidence at protein level"/>
<sequence length="382" mass="44863">MRRTFSQLATRLLKSKDDELKSTLKYLTKGPVKLLGPLFESSEVNEQGSLLNRSRTKENNLQNHHIENILRILNSNLPEVESKKQKVAVHYDVLFSHLNSIVTQATDNKSSSSKELQGSSSEDLYDRLLLLQYVGKLTNVRQITEILLSKKFNKFDKVWEHRALFDEYQRVVISILLYYRTHDVQIRKDYEPRWLSDYSDLPFPLRRLLWRCLTSNVSEDNIRQNIIHYIKLLGANWRNNDLILIYQSLYEKSHILPDLTVLNHNKDDGFSFTQNQILLVRILRAISKCVEEEPKLVKKWLIDIVKLSIQSKIMLESPKKPSTPIMDQYKFIRSLDISIRSIHRTCQDKLIFEDLQVNLGSVLKMINEEEHELKTHLPLNLI</sequence>
<reference key="1">
    <citation type="journal article" date="1996" name="Yeast">
        <title>Sequence analysis of a 40.7 kb segment from the left arm of yeast chromosome X reveals 14 known genes and 13 new open reading frames including homologues of genes clustered on the right arm of chromosome XI.</title>
        <authorList>
            <person name="Katsoulou C."/>
            <person name="Tzermia M."/>
            <person name="Tavernarakis N."/>
            <person name="Alexandraki D."/>
        </authorList>
    </citation>
    <scope>NUCLEOTIDE SEQUENCE [GENOMIC DNA]</scope>
    <source>
        <strain>ATCC 96604 / S288c / FY1679</strain>
    </source>
</reference>
<reference key="2">
    <citation type="journal article" date="1996" name="EMBO J.">
        <title>Complete nucleotide sequence of Saccharomyces cerevisiae chromosome X.</title>
        <authorList>
            <person name="Galibert F."/>
            <person name="Alexandraki D."/>
            <person name="Baur A."/>
            <person name="Boles E."/>
            <person name="Chalwatzis N."/>
            <person name="Chuat J.-C."/>
            <person name="Coster F."/>
            <person name="Cziepluch C."/>
            <person name="de Haan M."/>
            <person name="Domdey H."/>
            <person name="Durand P."/>
            <person name="Entian K.-D."/>
            <person name="Gatius M."/>
            <person name="Goffeau A."/>
            <person name="Grivell L.A."/>
            <person name="Hennemann A."/>
            <person name="Herbert C.J."/>
            <person name="Heumann K."/>
            <person name="Hilger F."/>
            <person name="Hollenberg C.P."/>
            <person name="Huang M.-E."/>
            <person name="Jacq C."/>
            <person name="Jauniaux J.-C."/>
            <person name="Katsoulou C."/>
            <person name="Kirchrath L."/>
            <person name="Kleine K."/>
            <person name="Kordes E."/>
            <person name="Koetter P."/>
            <person name="Liebl S."/>
            <person name="Louis E.J."/>
            <person name="Manus V."/>
            <person name="Mewes H.-W."/>
            <person name="Miosga T."/>
            <person name="Obermaier B."/>
            <person name="Perea J."/>
            <person name="Pohl T.M."/>
            <person name="Portetelle D."/>
            <person name="Pujol A."/>
            <person name="Purnelle B."/>
            <person name="Ramezani Rad M."/>
            <person name="Rasmussen S.W."/>
            <person name="Rose M."/>
            <person name="Rossau R."/>
            <person name="Schaaff-Gerstenschlaeger I."/>
            <person name="Smits P.H.M."/>
            <person name="Scarcez T."/>
            <person name="Soriano N."/>
            <person name="To Van D."/>
            <person name="Tzermia M."/>
            <person name="Van Broekhoven A."/>
            <person name="Vandenbol M."/>
            <person name="Wedler H."/>
            <person name="von Wettstein D."/>
            <person name="Wambutt R."/>
            <person name="Zagulski M."/>
            <person name="Zollner A."/>
            <person name="Karpfinger-Hartl L."/>
        </authorList>
    </citation>
    <scope>NUCLEOTIDE SEQUENCE [LARGE SCALE GENOMIC DNA]</scope>
    <source>
        <strain>ATCC 204508 / S288c</strain>
    </source>
</reference>
<reference key="3">
    <citation type="journal article" date="2014" name="G3 (Bethesda)">
        <title>The reference genome sequence of Saccharomyces cerevisiae: Then and now.</title>
        <authorList>
            <person name="Engel S.R."/>
            <person name="Dietrich F.S."/>
            <person name="Fisk D.G."/>
            <person name="Binkley G."/>
            <person name="Balakrishnan R."/>
            <person name="Costanzo M.C."/>
            <person name="Dwight S.S."/>
            <person name="Hitz B.C."/>
            <person name="Karra K."/>
            <person name="Nash R.S."/>
            <person name="Weng S."/>
            <person name="Wong E.D."/>
            <person name="Lloyd P."/>
            <person name="Skrzypek M.S."/>
            <person name="Miyasato S.R."/>
            <person name="Simison M."/>
            <person name="Cherry J.M."/>
        </authorList>
    </citation>
    <scope>GENOME REANNOTATION</scope>
    <source>
        <strain>ATCC 204508 / S288c</strain>
    </source>
</reference>
<reference key="4">
    <citation type="journal article" date="2003" name="Nature">
        <title>Global analysis of protein localization in budding yeast.</title>
        <authorList>
            <person name="Huh W.-K."/>
            <person name="Falvo J.V."/>
            <person name="Gerke L.C."/>
            <person name="Carroll A.S."/>
            <person name="Howson R.W."/>
            <person name="Weissman J.S."/>
            <person name="O'Shea E.K."/>
        </authorList>
    </citation>
    <scope>SUBCELLULAR LOCATION [LARGE SCALE ANALYSIS]</scope>
</reference>
<reference key="5">
    <citation type="journal article" date="2003" name="Nature">
        <title>Global analysis of protein expression in yeast.</title>
        <authorList>
            <person name="Ghaemmaghami S."/>
            <person name="Huh W.-K."/>
            <person name="Bower K."/>
            <person name="Howson R.W."/>
            <person name="Belle A."/>
            <person name="Dephoure N."/>
            <person name="O'Shea E.K."/>
            <person name="Weissman J.S."/>
        </authorList>
    </citation>
    <scope>LEVEL OF PROTEIN EXPRESSION [LARGE SCALE ANALYSIS]</scope>
</reference>
<reference key="6">
    <citation type="journal article" date="2015" name="Cell Rep.">
        <title>Organization of mitochondrial gene expression in two distinct ribosome-containing assemblies.</title>
        <authorList>
            <person name="Kehrein K."/>
            <person name="Schilling R."/>
            <person name="Moller-Hergt B.V."/>
            <person name="Wurm C.A."/>
            <person name="Jakobs S."/>
            <person name="Lamkemeyer T."/>
            <person name="Langer T."/>
            <person name="Ott M."/>
        </authorList>
    </citation>
    <scope>FUNCTION</scope>
    <scope>SUBUNIT</scope>
</reference>
<comment type="function">
    <text evidence="4">Component of MIOREX complexes, large expressome-like assemblies of ribosomes with factors involved in all the steps of post-transcriptional gene expression.</text>
</comment>
<comment type="subunit">
    <text evidence="4">Associates with the mitochondrial ribosome.</text>
</comment>
<comment type="subcellular location">
    <subcellularLocation>
        <location evidence="2">Mitochondrion</location>
    </subcellularLocation>
</comment>
<comment type="miscellaneous">
    <text evidence="3">Present with 981 molecules/cell in log phase SD medium.</text>
</comment>
<name>MRX5_YEAST</name>
<dbReference type="EMBL" id="Z49422">
    <property type="protein sequence ID" value="CAA89442.1"/>
    <property type="molecule type" value="Genomic_DNA"/>
</dbReference>
<dbReference type="EMBL" id="X87371">
    <property type="protein sequence ID" value="CAA60808.1"/>
    <property type="molecule type" value="Genomic_DNA"/>
</dbReference>
<dbReference type="EMBL" id="BK006943">
    <property type="protein sequence ID" value="DAA08654.1"/>
    <property type="molecule type" value="Genomic_DNA"/>
</dbReference>
<dbReference type="PIR" id="S55166">
    <property type="entry name" value="S55166"/>
</dbReference>
<dbReference type="RefSeq" id="NP_012388.1">
    <property type="nucleotide sequence ID" value="NM_001181580.1"/>
</dbReference>
<dbReference type="SMR" id="P47007"/>
<dbReference type="BioGRID" id="33611">
    <property type="interactions" value="217"/>
</dbReference>
<dbReference type="FunCoup" id="P47007">
    <property type="interactions" value="38"/>
</dbReference>
<dbReference type="IntAct" id="P47007">
    <property type="interactions" value="30"/>
</dbReference>
<dbReference type="MINT" id="P47007"/>
<dbReference type="STRING" id="4932.YJL147C"/>
<dbReference type="PaxDb" id="4932-YJL147C"/>
<dbReference type="PeptideAtlas" id="P47007"/>
<dbReference type="EnsemblFungi" id="YJL147C_mRNA">
    <property type="protein sequence ID" value="YJL147C"/>
    <property type="gene ID" value="YJL147C"/>
</dbReference>
<dbReference type="GeneID" id="853294"/>
<dbReference type="KEGG" id="sce:YJL147C"/>
<dbReference type="AGR" id="SGD:S000003683"/>
<dbReference type="SGD" id="S000003683">
    <property type="gene designation" value="MRX5"/>
</dbReference>
<dbReference type="VEuPathDB" id="FungiDB:YJL147C"/>
<dbReference type="eggNOG" id="ENOG502RYWP">
    <property type="taxonomic scope" value="Eukaryota"/>
</dbReference>
<dbReference type="HOGENOM" id="CLU_061864_0_0_1"/>
<dbReference type="InParanoid" id="P47007"/>
<dbReference type="OMA" id="KRINTHY"/>
<dbReference type="OrthoDB" id="4051837at2759"/>
<dbReference type="BioCyc" id="YEAST:G3O-31591-MONOMER"/>
<dbReference type="BioGRID-ORCS" id="853294">
    <property type="hits" value="0 hits in 10 CRISPR screens"/>
</dbReference>
<dbReference type="PRO" id="PR:P47007"/>
<dbReference type="Proteomes" id="UP000002311">
    <property type="component" value="Chromosome X"/>
</dbReference>
<dbReference type="RNAct" id="P47007">
    <property type="molecule type" value="protein"/>
</dbReference>
<dbReference type="GO" id="GO:0005739">
    <property type="term" value="C:mitochondrion"/>
    <property type="evidence" value="ECO:0007005"/>
    <property type="project" value="SGD"/>
</dbReference>
<accession>P47007</accession>
<accession>D6VW38</accession>
<organism>
    <name type="scientific">Saccharomyces cerevisiae (strain ATCC 204508 / S288c)</name>
    <name type="common">Baker's yeast</name>
    <dbReference type="NCBI Taxonomy" id="559292"/>
    <lineage>
        <taxon>Eukaryota</taxon>
        <taxon>Fungi</taxon>
        <taxon>Dikarya</taxon>
        <taxon>Ascomycota</taxon>
        <taxon>Saccharomycotina</taxon>
        <taxon>Saccharomycetes</taxon>
        <taxon>Saccharomycetales</taxon>
        <taxon>Saccharomycetaceae</taxon>
        <taxon>Saccharomyces</taxon>
    </lineage>
</organism>
<protein>
    <recommendedName>
        <fullName evidence="6">MIOREX complex component 5</fullName>
    </recommendedName>
    <alternativeName>
        <fullName evidence="5">Mitochondrial organization of gene expression protein 5</fullName>
    </alternativeName>
</protein>
<keyword id="KW-0496">Mitochondrion</keyword>
<keyword id="KW-1185">Reference proteome</keyword>
<keyword id="KW-0809">Transit peptide</keyword>
<feature type="transit peptide" description="Mitochondrion" evidence="1">
    <location>
        <begin position="1"/>
        <end position="12"/>
    </location>
</feature>
<feature type="chain" id="PRO_0000203032" description="MIOREX complex component 5">
    <location>
        <begin position="13"/>
        <end position="382"/>
    </location>
</feature>
<gene>
    <name evidence="5" type="primary">MRX5</name>
    <name evidence="7" type="ordered locus">YJL147C</name>
    <name type="ORF">J0639</name>
</gene>